<proteinExistence type="evidence at transcript level"/>
<accession>Q6NYG8</accession>
<name>DPYD_DANRE</name>
<feature type="chain" id="PRO_0000327504" description="Dihydropyrimidine dehydrogenase [NADP(+)]">
    <location>
        <begin position="1"/>
        <end position="1022"/>
    </location>
</feature>
<feature type="domain" description="4Fe-4S ferredoxin-type 1" evidence="4">
    <location>
        <begin position="69"/>
        <end position="100"/>
    </location>
</feature>
<feature type="domain" description="4Fe-4S ferredoxin-type 2" evidence="4">
    <location>
        <begin position="943"/>
        <end position="975"/>
    </location>
</feature>
<feature type="domain" description="4Fe-4S ferredoxin-type 3" evidence="4">
    <location>
        <begin position="976"/>
        <end position="1006"/>
    </location>
</feature>
<feature type="region of interest" description="Disordered" evidence="5">
    <location>
        <begin position="26"/>
        <end position="45"/>
    </location>
</feature>
<feature type="active site" description="Proton acceptor" evidence="1">
    <location>
        <position position="671"/>
    </location>
</feature>
<feature type="binding site" evidence="1">
    <location>
        <position position="79"/>
    </location>
    <ligand>
        <name>[4Fe-4S] cluster</name>
        <dbReference type="ChEBI" id="CHEBI:49883"/>
        <label>1</label>
    </ligand>
</feature>
<feature type="binding site" evidence="1">
    <location>
        <position position="82"/>
    </location>
    <ligand>
        <name>[4Fe-4S] cluster</name>
        <dbReference type="ChEBI" id="CHEBI:49883"/>
        <label>1</label>
    </ligand>
</feature>
<feature type="binding site" evidence="1">
    <location>
        <position position="87"/>
    </location>
    <ligand>
        <name>[4Fe-4S] cluster</name>
        <dbReference type="ChEBI" id="CHEBI:49883"/>
        <label>1</label>
    </ligand>
</feature>
<feature type="binding site" evidence="1">
    <location>
        <position position="91"/>
    </location>
    <ligand>
        <name>[4Fe-4S] cluster</name>
        <dbReference type="ChEBI" id="CHEBI:49883"/>
        <label>2</label>
    </ligand>
</feature>
<feature type="binding site" evidence="1">
    <location>
        <position position="129"/>
    </location>
    <ligand>
        <name>FAD</name>
        <dbReference type="ChEBI" id="CHEBI:57692"/>
    </ligand>
</feature>
<feature type="binding site" evidence="1">
    <location>
        <position position="130"/>
    </location>
    <ligand>
        <name>[4Fe-4S] cluster</name>
        <dbReference type="ChEBI" id="CHEBI:49883"/>
        <label>2</label>
    </ligand>
</feature>
<feature type="binding site" evidence="1">
    <location>
        <position position="136"/>
    </location>
    <ligand>
        <name>[4Fe-4S] cluster</name>
        <dbReference type="ChEBI" id="CHEBI:49883"/>
        <label>2</label>
    </ligand>
</feature>
<feature type="binding site" evidence="1">
    <location>
        <position position="140"/>
    </location>
    <ligand>
        <name>[4Fe-4S] cluster</name>
        <dbReference type="ChEBI" id="CHEBI:49883"/>
        <label>1</label>
    </ligand>
</feature>
<feature type="binding site" evidence="1">
    <location>
        <position position="156"/>
    </location>
    <ligand>
        <name>[4Fe-4S] cluster</name>
        <dbReference type="ChEBI" id="CHEBI:49883"/>
        <label>2</label>
    </ligand>
</feature>
<feature type="binding site" evidence="1">
    <location>
        <begin position="194"/>
        <end position="198"/>
    </location>
    <ligand>
        <name>FAD</name>
        <dbReference type="ChEBI" id="CHEBI:57692"/>
    </ligand>
</feature>
<feature type="binding site" evidence="1">
    <location>
        <begin position="218"/>
        <end position="226"/>
    </location>
    <ligand>
        <name>FAD</name>
        <dbReference type="ChEBI" id="CHEBI:57692"/>
    </ligand>
</feature>
<feature type="binding site" evidence="1">
    <location>
        <position position="235"/>
    </location>
    <ligand>
        <name>FAD</name>
        <dbReference type="ChEBI" id="CHEBI:57692"/>
    </ligand>
</feature>
<feature type="binding site" evidence="1">
    <location>
        <position position="261"/>
    </location>
    <ligand>
        <name>FAD</name>
        <dbReference type="ChEBI" id="CHEBI:57692"/>
    </ligand>
</feature>
<feature type="binding site" evidence="1">
    <location>
        <begin position="340"/>
        <end position="343"/>
    </location>
    <ligand>
        <name>NADP(+)</name>
        <dbReference type="ChEBI" id="CHEBI:58349"/>
    </ligand>
</feature>
<feature type="binding site" evidence="1">
    <location>
        <begin position="364"/>
        <end position="365"/>
    </location>
    <ligand>
        <name>NADP(+)</name>
        <dbReference type="ChEBI" id="CHEBI:58349"/>
    </ligand>
</feature>
<feature type="binding site" evidence="1">
    <location>
        <position position="371"/>
    </location>
    <ligand>
        <name>NADP(+)</name>
        <dbReference type="ChEBI" id="CHEBI:58349"/>
    </ligand>
</feature>
<feature type="binding site" evidence="1">
    <location>
        <begin position="437"/>
        <end position="439"/>
    </location>
    <ligand>
        <name>NADP(+)</name>
        <dbReference type="ChEBI" id="CHEBI:58349"/>
    </ligand>
</feature>
<feature type="binding site" evidence="1">
    <location>
        <begin position="480"/>
        <end position="489"/>
    </location>
    <ligand>
        <name>FAD</name>
        <dbReference type="ChEBI" id="CHEBI:57692"/>
    </ligand>
</feature>
<feature type="binding site" evidence="1">
    <location>
        <begin position="481"/>
        <end position="487"/>
    </location>
    <ligand>
        <name>NADP(+)</name>
        <dbReference type="ChEBI" id="CHEBI:58349"/>
    </ligand>
</feature>
<feature type="binding site" evidence="1">
    <location>
        <position position="550"/>
    </location>
    <ligand>
        <name>FMN</name>
        <dbReference type="ChEBI" id="CHEBI:58210"/>
    </ligand>
</feature>
<feature type="binding site" evidence="1">
    <location>
        <begin position="574"/>
        <end position="575"/>
    </location>
    <ligand>
        <name>FMN</name>
        <dbReference type="ChEBI" id="CHEBI:58210"/>
    </ligand>
</feature>
<feature type="binding site" evidence="1">
    <location>
        <position position="609"/>
    </location>
    <ligand>
        <name>substrate</name>
    </ligand>
</feature>
<feature type="binding site" evidence="1">
    <location>
        <begin position="668"/>
        <end position="670"/>
    </location>
    <ligand>
        <name>substrate</name>
    </ligand>
</feature>
<feature type="binding site" evidence="1">
    <location>
        <position position="709"/>
    </location>
    <ligand>
        <name>FMN</name>
        <dbReference type="ChEBI" id="CHEBI:58210"/>
    </ligand>
</feature>
<feature type="binding site" evidence="1">
    <location>
        <begin position="736"/>
        <end position="737"/>
    </location>
    <ligand>
        <name>substrate</name>
    </ligand>
</feature>
<feature type="binding site" evidence="1">
    <location>
        <position position="767"/>
    </location>
    <ligand>
        <name>FMN</name>
        <dbReference type="ChEBI" id="CHEBI:58210"/>
    </ligand>
</feature>
<feature type="binding site" evidence="1">
    <location>
        <begin position="793"/>
        <end position="795"/>
    </location>
    <ligand>
        <name>FMN</name>
        <dbReference type="ChEBI" id="CHEBI:58210"/>
    </ligand>
</feature>
<feature type="binding site" evidence="1">
    <location>
        <begin position="816"/>
        <end position="817"/>
    </location>
    <ligand>
        <name>FMN</name>
        <dbReference type="ChEBI" id="CHEBI:58210"/>
    </ligand>
</feature>
<feature type="binding site" evidence="1">
    <location>
        <position position="952"/>
    </location>
    <ligand>
        <name>[4Fe-4S] cluster</name>
        <dbReference type="ChEBI" id="CHEBI:49883"/>
        <label>3</label>
    </ligand>
</feature>
<feature type="binding site" evidence="1">
    <location>
        <position position="955"/>
    </location>
    <ligand>
        <name>[4Fe-4S] cluster</name>
        <dbReference type="ChEBI" id="CHEBI:49883"/>
        <label>3</label>
    </ligand>
</feature>
<feature type="binding site" evidence="1">
    <location>
        <position position="958"/>
    </location>
    <ligand>
        <name>[4Fe-4S] cluster</name>
        <dbReference type="ChEBI" id="CHEBI:49883"/>
        <label>3</label>
    </ligand>
</feature>
<feature type="binding site" evidence="1">
    <location>
        <position position="962"/>
    </location>
    <ligand>
        <name>[4Fe-4S] cluster</name>
        <dbReference type="ChEBI" id="CHEBI:49883"/>
        <label>3</label>
    </ligand>
</feature>
<feature type="binding site" evidence="1">
    <location>
        <position position="985"/>
    </location>
    <ligand>
        <name>[4Fe-4S] cluster</name>
        <dbReference type="ChEBI" id="CHEBI:49883"/>
        <label>4</label>
    </ligand>
</feature>
<feature type="binding site" evidence="1">
    <location>
        <position position="988"/>
    </location>
    <ligand>
        <name>[4Fe-4S] cluster</name>
        <dbReference type="ChEBI" id="CHEBI:49883"/>
        <label>4</label>
    </ligand>
</feature>
<feature type="binding site" evidence="1">
    <location>
        <position position="991"/>
    </location>
    <ligand>
        <name>[4Fe-4S] cluster</name>
        <dbReference type="ChEBI" id="CHEBI:49883"/>
        <label>4</label>
    </ligand>
</feature>
<feature type="binding site" evidence="1">
    <location>
        <position position="995"/>
    </location>
    <ligand>
        <name>[4Fe-4S] cluster</name>
        <dbReference type="ChEBI" id="CHEBI:49883"/>
        <label>4</label>
    </ligand>
</feature>
<gene>
    <name type="primary">dpyd</name>
    <name type="ORF">zgc:77205</name>
</gene>
<organism>
    <name type="scientific">Danio rerio</name>
    <name type="common">Zebrafish</name>
    <name type="synonym">Brachydanio rerio</name>
    <dbReference type="NCBI Taxonomy" id="7955"/>
    <lineage>
        <taxon>Eukaryota</taxon>
        <taxon>Metazoa</taxon>
        <taxon>Chordata</taxon>
        <taxon>Craniata</taxon>
        <taxon>Vertebrata</taxon>
        <taxon>Euteleostomi</taxon>
        <taxon>Actinopterygii</taxon>
        <taxon>Neopterygii</taxon>
        <taxon>Teleostei</taxon>
        <taxon>Ostariophysi</taxon>
        <taxon>Cypriniformes</taxon>
        <taxon>Danionidae</taxon>
        <taxon>Danioninae</taxon>
        <taxon>Danio</taxon>
    </lineage>
</organism>
<protein>
    <recommendedName>
        <fullName>Dihydropyrimidine dehydrogenase [NADP(+)]</fullName>
        <shortName>DHPDHase</shortName>
        <shortName>DPD</shortName>
        <ecNumber evidence="2">1.3.1.2</ecNumber>
    </recommendedName>
    <alternativeName>
        <fullName>Dihydrothymine dehydrogenase</fullName>
    </alternativeName>
    <alternativeName>
        <fullName>Dihydrouracil dehydrogenase</fullName>
    </alternativeName>
</protein>
<reference key="1">
    <citation type="submission" date="2004-02" db="EMBL/GenBank/DDBJ databases">
        <authorList>
            <consortium name="NIH - Zebrafish Gene Collection (ZGC) project"/>
        </authorList>
    </citation>
    <scope>NUCLEOTIDE SEQUENCE [LARGE SCALE MRNA]</scope>
    <source>
        <tissue>Embryo</tissue>
    </source>
</reference>
<dbReference type="EC" id="1.3.1.2" evidence="2"/>
<dbReference type="EMBL" id="BC066602">
    <property type="protein sequence ID" value="AAH66602.1"/>
    <property type="molecule type" value="mRNA"/>
</dbReference>
<dbReference type="RefSeq" id="NP_998058.1">
    <property type="nucleotide sequence ID" value="NM_212893.1"/>
</dbReference>
<dbReference type="SMR" id="Q6NYG8"/>
<dbReference type="FunCoup" id="Q6NYG8">
    <property type="interactions" value="215"/>
</dbReference>
<dbReference type="STRING" id="7955.ENSDARP00000108791"/>
<dbReference type="PaxDb" id="7955-ENSDARP00000108791"/>
<dbReference type="GeneID" id="405829"/>
<dbReference type="KEGG" id="dre:405829"/>
<dbReference type="AGR" id="ZFIN:ZDB-GENE-040426-2459"/>
<dbReference type="CTD" id="405829"/>
<dbReference type="ZFIN" id="ZDB-GENE-040426-2459">
    <property type="gene designation" value="dpydb"/>
</dbReference>
<dbReference type="eggNOG" id="KOG1799">
    <property type="taxonomic scope" value="Eukaryota"/>
</dbReference>
<dbReference type="InParanoid" id="Q6NYG8"/>
<dbReference type="OrthoDB" id="4327079at2759"/>
<dbReference type="PhylomeDB" id="Q6NYG8"/>
<dbReference type="Reactome" id="R-DRE-73621">
    <property type="pathway name" value="Pyrimidine catabolism"/>
</dbReference>
<dbReference type="UniPathway" id="UPA00131"/>
<dbReference type="PRO" id="PR:Q6NYG8"/>
<dbReference type="Proteomes" id="UP000000437">
    <property type="component" value="Chromosome 2"/>
</dbReference>
<dbReference type="GO" id="GO:0005737">
    <property type="term" value="C:cytoplasm"/>
    <property type="evidence" value="ECO:0000250"/>
    <property type="project" value="UniProtKB"/>
</dbReference>
<dbReference type="GO" id="GO:0005829">
    <property type="term" value="C:cytosol"/>
    <property type="evidence" value="ECO:0000318"/>
    <property type="project" value="GO_Central"/>
</dbReference>
<dbReference type="GO" id="GO:0051539">
    <property type="term" value="F:4 iron, 4 sulfur cluster binding"/>
    <property type="evidence" value="ECO:0007669"/>
    <property type="project" value="UniProtKB-KW"/>
</dbReference>
<dbReference type="GO" id="GO:0017113">
    <property type="term" value="F:dihydropyrimidine dehydrogenase (NADP+) activity"/>
    <property type="evidence" value="ECO:0000250"/>
    <property type="project" value="UniProtKB"/>
</dbReference>
<dbReference type="GO" id="GO:0046872">
    <property type="term" value="F:metal ion binding"/>
    <property type="evidence" value="ECO:0007669"/>
    <property type="project" value="UniProtKB-KW"/>
</dbReference>
<dbReference type="GO" id="GO:0050661">
    <property type="term" value="F:NADP binding"/>
    <property type="evidence" value="ECO:0000318"/>
    <property type="project" value="GO_Central"/>
</dbReference>
<dbReference type="GO" id="GO:0002058">
    <property type="term" value="F:uracil binding"/>
    <property type="evidence" value="ECO:0000318"/>
    <property type="project" value="GO_Central"/>
</dbReference>
<dbReference type="GO" id="GO:0019483">
    <property type="term" value="P:beta-alanine biosynthetic process"/>
    <property type="evidence" value="ECO:0007669"/>
    <property type="project" value="UniProtKB-UniPathway"/>
</dbReference>
<dbReference type="GO" id="GO:0006214">
    <property type="term" value="P:thymidine catabolic process"/>
    <property type="evidence" value="ECO:0000250"/>
    <property type="project" value="UniProtKB"/>
</dbReference>
<dbReference type="GO" id="GO:0006210">
    <property type="term" value="P:thymine catabolic process"/>
    <property type="evidence" value="ECO:0000318"/>
    <property type="project" value="GO_Central"/>
</dbReference>
<dbReference type="GO" id="GO:0006212">
    <property type="term" value="P:uracil catabolic process"/>
    <property type="evidence" value="ECO:0000250"/>
    <property type="project" value="UniProtKB"/>
</dbReference>
<dbReference type="CDD" id="cd02940">
    <property type="entry name" value="DHPD_FMN"/>
    <property type="match status" value="1"/>
</dbReference>
<dbReference type="FunFam" id="1.10.1060.10:FF:000007">
    <property type="entry name" value="Dihydropyrimidine dehydrogenase [NADP(+)]"/>
    <property type="match status" value="1"/>
</dbReference>
<dbReference type="FunFam" id="3.20.20.70:FF:000027">
    <property type="entry name" value="Dihydropyrimidine dehydrogenase [NADP(+)]"/>
    <property type="match status" value="1"/>
</dbReference>
<dbReference type="FunFam" id="3.30.70.20:FF:000023">
    <property type="entry name" value="Dihydropyrimidine dehydrogenase [NADP(+)]"/>
    <property type="match status" value="1"/>
</dbReference>
<dbReference type="FunFam" id="3.50.50.60:FF:000056">
    <property type="entry name" value="Dihydropyrimidine dehydrogenase [NADP(+)]"/>
    <property type="match status" value="1"/>
</dbReference>
<dbReference type="FunFam" id="3.50.50.60:FF:000061">
    <property type="entry name" value="Dihydropyrimidine dehydrogenase [NADP(+)]"/>
    <property type="match status" value="1"/>
</dbReference>
<dbReference type="Gene3D" id="3.30.70.20">
    <property type="match status" value="1"/>
</dbReference>
<dbReference type="Gene3D" id="3.20.20.70">
    <property type="entry name" value="Aldolase class I"/>
    <property type="match status" value="1"/>
</dbReference>
<dbReference type="Gene3D" id="1.10.1060.10">
    <property type="entry name" value="Alpha-helical ferredoxin"/>
    <property type="match status" value="1"/>
</dbReference>
<dbReference type="Gene3D" id="3.50.50.60">
    <property type="entry name" value="FAD/NAD(P)-binding domain"/>
    <property type="match status" value="2"/>
</dbReference>
<dbReference type="InterPro" id="IPR017896">
    <property type="entry name" value="4Fe4S_Fe-S-bd"/>
</dbReference>
<dbReference type="InterPro" id="IPR017900">
    <property type="entry name" value="4Fe4S_Fe_S_CS"/>
</dbReference>
<dbReference type="InterPro" id="IPR013785">
    <property type="entry name" value="Aldolase_TIM"/>
</dbReference>
<dbReference type="InterPro" id="IPR005720">
    <property type="entry name" value="Dihydroorotate_DH_cat"/>
</dbReference>
<dbReference type="InterPro" id="IPR028261">
    <property type="entry name" value="DPD_II"/>
</dbReference>
<dbReference type="InterPro" id="IPR036188">
    <property type="entry name" value="FAD/NAD-bd_sf"/>
</dbReference>
<dbReference type="InterPro" id="IPR023753">
    <property type="entry name" value="FAD/NAD-binding_dom"/>
</dbReference>
<dbReference type="InterPro" id="IPR009051">
    <property type="entry name" value="Helical_ferredxn"/>
</dbReference>
<dbReference type="PANTHER" id="PTHR43073">
    <property type="entry name" value="DIHYDROPYRIMIDINE DEHYDROGENASE [NADP(+)]"/>
    <property type="match status" value="1"/>
</dbReference>
<dbReference type="PANTHER" id="PTHR43073:SF2">
    <property type="entry name" value="DIHYDROPYRIMIDINE DEHYDROGENASE [NADP(+)]"/>
    <property type="match status" value="1"/>
</dbReference>
<dbReference type="Pfam" id="PF01180">
    <property type="entry name" value="DHO_dh"/>
    <property type="match status" value="1"/>
</dbReference>
<dbReference type="Pfam" id="PF14691">
    <property type="entry name" value="Fer4_20"/>
    <property type="match status" value="1"/>
</dbReference>
<dbReference type="Pfam" id="PF14697">
    <property type="entry name" value="Fer4_21"/>
    <property type="match status" value="1"/>
</dbReference>
<dbReference type="Pfam" id="PF07992">
    <property type="entry name" value="Pyr_redox_2"/>
    <property type="match status" value="1"/>
</dbReference>
<dbReference type="PRINTS" id="PR00419">
    <property type="entry name" value="ADXRDTASE"/>
</dbReference>
<dbReference type="SUPFAM" id="SSF54862">
    <property type="entry name" value="4Fe-4S ferredoxins"/>
    <property type="match status" value="1"/>
</dbReference>
<dbReference type="SUPFAM" id="SSF46548">
    <property type="entry name" value="alpha-helical ferredoxin"/>
    <property type="match status" value="1"/>
</dbReference>
<dbReference type="SUPFAM" id="SSF51395">
    <property type="entry name" value="FMN-linked oxidoreductases"/>
    <property type="match status" value="1"/>
</dbReference>
<dbReference type="SUPFAM" id="SSF51971">
    <property type="entry name" value="Nucleotide-binding domain"/>
    <property type="match status" value="2"/>
</dbReference>
<dbReference type="PROSITE" id="PS00198">
    <property type="entry name" value="4FE4S_FER_1"/>
    <property type="match status" value="1"/>
</dbReference>
<dbReference type="PROSITE" id="PS51379">
    <property type="entry name" value="4FE4S_FER_2"/>
    <property type="match status" value="3"/>
</dbReference>
<comment type="function">
    <text evidence="2">Involved in pyrimidine base degradation. Catalyzes the reduction of uracil and thymine. Also involved the degradation of the chemotherapeutic drug 5-fluorouracil.</text>
</comment>
<comment type="catalytic activity">
    <reaction evidence="2">
        <text>5,6-dihydrouracil + NADP(+) = uracil + NADPH + H(+)</text>
        <dbReference type="Rhea" id="RHEA:18093"/>
        <dbReference type="ChEBI" id="CHEBI:15378"/>
        <dbReference type="ChEBI" id="CHEBI:15901"/>
        <dbReference type="ChEBI" id="CHEBI:17568"/>
        <dbReference type="ChEBI" id="CHEBI:57783"/>
        <dbReference type="ChEBI" id="CHEBI:58349"/>
        <dbReference type="EC" id="1.3.1.2"/>
    </reaction>
    <physiologicalReaction direction="right-to-left" evidence="2">
        <dbReference type="Rhea" id="RHEA:18095"/>
    </physiologicalReaction>
</comment>
<comment type="catalytic activity">
    <reaction evidence="2">
        <text>5,6-dihydrothymine + NADP(+) = thymine + NADPH + H(+)</text>
        <dbReference type="Rhea" id="RHEA:58284"/>
        <dbReference type="ChEBI" id="CHEBI:15378"/>
        <dbReference type="ChEBI" id="CHEBI:17821"/>
        <dbReference type="ChEBI" id="CHEBI:27468"/>
        <dbReference type="ChEBI" id="CHEBI:57783"/>
        <dbReference type="ChEBI" id="CHEBI:58349"/>
        <dbReference type="EC" id="1.3.1.2"/>
    </reaction>
    <physiologicalReaction direction="right-to-left" evidence="2">
        <dbReference type="Rhea" id="RHEA:58286"/>
    </physiologicalReaction>
</comment>
<comment type="cofactor">
    <cofactor evidence="3">
        <name>FAD</name>
        <dbReference type="ChEBI" id="CHEBI:57692"/>
    </cofactor>
    <text evidence="3">Binds 2 FAD.</text>
</comment>
<comment type="cofactor">
    <cofactor evidence="3">
        <name>FMN</name>
        <dbReference type="ChEBI" id="CHEBI:58210"/>
    </cofactor>
    <text evidence="3">Binds 2 FMN.</text>
</comment>
<comment type="cofactor">
    <cofactor evidence="3">
        <name>[4Fe-4S] cluster</name>
        <dbReference type="ChEBI" id="CHEBI:49883"/>
    </cofactor>
    <text evidence="3">Binds 4 [4Fe-4S] clusters. Contains approximately 16 iron atoms per subunit.</text>
</comment>
<comment type="pathway">
    <text evidence="2">Amino-acid biosynthesis; beta-alanine biosynthesis.</text>
</comment>
<comment type="subunit">
    <text evidence="2">Homodimer.</text>
</comment>
<comment type="subcellular location">
    <subcellularLocation>
        <location evidence="2">Cytoplasm</location>
    </subcellularLocation>
</comment>
<comment type="similarity">
    <text evidence="6">Belongs to the dihydropyrimidine dehydrogenase family.</text>
</comment>
<sequence>MATMLSKELQDIESILALNPRVKSHANVHSTASKKNEKKHWKRNPERSCDSCVNLENNFDDIKHTTLSERGALREALRCLKCADAPCQKSCPTNLDIKSFITSISNKNYYGAAKAILSDNPLGLTCGMVCPTSDLCVGGCNLYASEEGPINIGGLQQFATEVFSKMGIPQIRNPELPTADNMPKSFHTRIALIGCGPASISCASFLARLGYDNITIFEKQKYIGGLSTSEIPQFRLPYEVVQFEIDLMKDLGVKVVLEKGLGQNGLTLTSLKEEGYQVVYIGIGLPQANRDKIFEGLTTEQGFYTSKDFLPLVAKASKIGMCNCRSQLPKLHGNVIVLGAGDTAFDCATSALRCGARRVFVVFRKGFTNIRAVPEEMEAAKEEKCEFLPFLSPHEVIKKNGRVSGLRFCRTEQQDDGTWIVDEEQIVHLKADFIISAFGSMLNDPAVTKALDPIKLNRWGTPEVNSETMQTTEPWVFAGGDIAGFANTTVESVNDGKQASWHIHKYIQSLHGNTISATPRLPLFHCSIDTVDISVEMCGIKFPNPFGLASAPPTTSAAMIRRAFEQGWGFALTKTFGLDKDLVTNVSPRIVRGTTSGHIFGPGQGSFLNIELISEKTAAYWCKSVAELKADFPKNIIIASIMCSYNQADWTELAKMAQESQADALELNLSCPHGMGERGMGLACGQDPELVRNICRWVRKATSIPFFAKLTPNVTNIVDIATAAYEGGADGVTATNTVSGLMALKADATPWPGIGRGARTTYGGVSGNAIRPIALRAVSAIARALPGFPILATGGIDSAESGLQFLHAGASVLQVCSAVQNQDFTVIEDYCLGLKALLYLKSIEELHDWDGQSPPTIRHQKGKPVPHVSELIGKSLPSFGPYLQTKTQALAKYKKDASGDVIMDTGAARVNIPKKPIPNVKDVIARALKHIGAYQELDNTEQVQALVDPEMCINCGKCYMTCNDSGYQAIKFDPETHLPVITDSCTGCTLCLSVCPIIDCIKMVSRTTPYEPKRGLPVNPVC</sequence>
<evidence type="ECO:0000250" key="1"/>
<evidence type="ECO:0000250" key="2">
    <source>
        <dbReference type="UniProtKB" id="Q12882"/>
    </source>
</evidence>
<evidence type="ECO:0000250" key="3">
    <source>
        <dbReference type="UniProtKB" id="Q28943"/>
    </source>
</evidence>
<evidence type="ECO:0000255" key="4">
    <source>
        <dbReference type="PROSITE-ProRule" id="PRU00711"/>
    </source>
</evidence>
<evidence type="ECO:0000256" key="5">
    <source>
        <dbReference type="SAM" id="MobiDB-lite"/>
    </source>
</evidence>
<evidence type="ECO:0000305" key="6"/>
<keyword id="KW-0004">4Fe-4S</keyword>
<keyword id="KW-0963">Cytoplasm</keyword>
<keyword id="KW-0274">FAD</keyword>
<keyword id="KW-0285">Flavoprotein</keyword>
<keyword id="KW-0288">FMN</keyword>
<keyword id="KW-0408">Iron</keyword>
<keyword id="KW-0411">Iron-sulfur</keyword>
<keyword id="KW-0479">Metal-binding</keyword>
<keyword id="KW-0521">NADP</keyword>
<keyword id="KW-0547">Nucleotide-binding</keyword>
<keyword id="KW-0560">Oxidoreductase</keyword>
<keyword id="KW-1185">Reference proteome</keyword>
<keyword id="KW-0677">Repeat</keyword>